<name>STS1_ASPFU</name>
<reference key="1">
    <citation type="journal article" date="2005" name="Nature">
        <title>Genomic sequence of the pathogenic and allergenic filamentous fungus Aspergillus fumigatus.</title>
        <authorList>
            <person name="Nierman W.C."/>
            <person name="Pain A."/>
            <person name="Anderson M.J."/>
            <person name="Wortman J.R."/>
            <person name="Kim H.S."/>
            <person name="Arroyo J."/>
            <person name="Berriman M."/>
            <person name="Abe K."/>
            <person name="Archer D.B."/>
            <person name="Bermejo C."/>
            <person name="Bennett J.W."/>
            <person name="Bowyer P."/>
            <person name="Chen D."/>
            <person name="Collins M."/>
            <person name="Coulsen R."/>
            <person name="Davies R."/>
            <person name="Dyer P.S."/>
            <person name="Farman M.L."/>
            <person name="Fedorova N."/>
            <person name="Fedorova N.D."/>
            <person name="Feldblyum T.V."/>
            <person name="Fischer R."/>
            <person name="Fosker N."/>
            <person name="Fraser A."/>
            <person name="Garcia J.L."/>
            <person name="Garcia M.J."/>
            <person name="Goble A."/>
            <person name="Goldman G.H."/>
            <person name="Gomi K."/>
            <person name="Griffith-Jones S."/>
            <person name="Gwilliam R."/>
            <person name="Haas B.J."/>
            <person name="Haas H."/>
            <person name="Harris D.E."/>
            <person name="Horiuchi H."/>
            <person name="Huang J."/>
            <person name="Humphray S."/>
            <person name="Jimenez J."/>
            <person name="Keller N."/>
            <person name="Khouri H."/>
            <person name="Kitamoto K."/>
            <person name="Kobayashi T."/>
            <person name="Konzack S."/>
            <person name="Kulkarni R."/>
            <person name="Kumagai T."/>
            <person name="Lafton A."/>
            <person name="Latge J.-P."/>
            <person name="Li W."/>
            <person name="Lord A."/>
            <person name="Lu C."/>
            <person name="Majoros W.H."/>
            <person name="May G.S."/>
            <person name="Miller B.L."/>
            <person name="Mohamoud Y."/>
            <person name="Molina M."/>
            <person name="Monod M."/>
            <person name="Mouyna I."/>
            <person name="Mulligan S."/>
            <person name="Murphy L.D."/>
            <person name="O'Neil S."/>
            <person name="Paulsen I."/>
            <person name="Penalva M.A."/>
            <person name="Pertea M."/>
            <person name="Price C."/>
            <person name="Pritchard B.L."/>
            <person name="Quail M.A."/>
            <person name="Rabbinowitsch E."/>
            <person name="Rawlins N."/>
            <person name="Rajandream M.A."/>
            <person name="Reichard U."/>
            <person name="Renauld H."/>
            <person name="Robson G.D."/>
            <person name="Rodriguez de Cordoba S."/>
            <person name="Rodriguez-Pena J.M."/>
            <person name="Ronning C.M."/>
            <person name="Rutter S."/>
            <person name="Salzberg S.L."/>
            <person name="Sanchez M."/>
            <person name="Sanchez-Ferrero J.C."/>
            <person name="Saunders D."/>
            <person name="Seeger K."/>
            <person name="Squares R."/>
            <person name="Squares S."/>
            <person name="Takeuchi M."/>
            <person name="Tekaia F."/>
            <person name="Turner G."/>
            <person name="Vazquez de Aldana C.R."/>
            <person name="Weidman J."/>
            <person name="White O."/>
            <person name="Woodward J.R."/>
            <person name="Yu J.-H."/>
            <person name="Fraser C.M."/>
            <person name="Galagan J.E."/>
            <person name="Asai K."/>
            <person name="Machida M."/>
            <person name="Hall N."/>
            <person name="Barrell B.G."/>
            <person name="Denning D.W."/>
        </authorList>
    </citation>
    <scope>NUCLEOTIDE SEQUENCE [LARGE SCALE GENOMIC DNA]</scope>
    <source>
        <strain>ATCC MYA-4609 / CBS 101355 / FGSC A1100 / Af293</strain>
    </source>
</reference>
<accession>Q4WNW3</accession>
<dbReference type="EMBL" id="AAHF01000005">
    <property type="protein sequence ID" value="EAL90071.1"/>
    <property type="molecule type" value="Genomic_DNA"/>
</dbReference>
<dbReference type="RefSeq" id="XP_752109.1">
    <property type="nucleotide sequence ID" value="XM_747016.1"/>
</dbReference>
<dbReference type="SMR" id="Q4WNW3"/>
<dbReference type="FunCoup" id="Q4WNW3">
    <property type="interactions" value="11"/>
</dbReference>
<dbReference type="STRING" id="330879.Q4WNW3"/>
<dbReference type="EnsemblFungi" id="EAL90071">
    <property type="protein sequence ID" value="EAL90071"/>
    <property type="gene ID" value="AFUA_4G07170"/>
</dbReference>
<dbReference type="GeneID" id="3509576"/>
<dbReference type="KEGG" id="afm:AFUA_4G07170"/>
<dbReference type="VEuPathDB" id="FungiDB:Afu4g07170"/>
<dbReference type="eggNOG" id="ENOG502RNK4">
    <property type="taxonomic scope" value="Eukaryota"/>
</dbReference>
<dbReference type="HOGENOM" id="CLU_033658_0_0_1"/>
<dbReference type="InParanoid" id="Q4WNW3"/>
<dbReference type="OMA" id="DYTPHFL"/>
<dbReference type="OrthoDB" id="10061064at2759"/>
<dbReference type="Proteomes" id="UP000002530">
    <property type="component" value="Chromosome 4"/>
</dbReference>
<dbReference type="GO" id="GO:0005737">
    <property type="term" value="C:cytoplasm"/>
    <property type="evidence" value="ECO:0007669"/>
    <property type="project" value="UniProtKB-SubCell"/>
</dbReference>
<dbReference type="GO" id="GO:0005634">
    <property type="term" value="C:nucleus"/>
    <property type="evidence" value="ECO:0007669"/>
    <property type="project" value="UniProtKB-SubCell"/>
</dbReference>
<dbReference type="GO" id="GO:0070628">
    <property type="term" value="F:proteasome binding"/>
    <property type="evidence" value="ECO:0000318"/>
    <property type="project" value="GO_Central"/>
</dbReference>
<dbReference type="GO" id="GO:0071630">
    <property type="term" value="P:nuclear protein quality control by the ubiquitin-proteasome system"/>
    <property type="evidence" value="ECO:0000318"/>
    <property type="project" value="GO_Central"/>
</dbReference>
<dbReference type="GO" id="GO:0031144">
    <property type="term" value="P:proteasome localization"/>
    <property type="evidence" value="ECO:0000318"/>
    <property type="project" value="GO_Central"/>
</dbReference>
<dbReference type="GO" id="GO:0015031">
    <property type="term" value="P:protein transport"/>
    <property type="evidence" value="ECO:0007669"/>
    <property type="project" value="UniProtKB-KW"/>
</dbReference>
<dbReference type="FunFam" id="1.20.58.1590:FF:000001">
    <property type="entry name" value="Tethering factor for nuclear proteasome STS1"/>
    <property type="match status" value="1"/>
</dbReference>
<dbReference type="Gene3D" id="1.20.58.1590">
    <property type="entry name" value="Tethering factor for nuclear proteasome Cut8/Sts1"/>
    <property type="match status" value="1"/>
</dbReference>
<dbReference type="InterPro" id="IPR013868">
    <property type="entry name" value="Cut8/Sts1_fam"/>
</dbReference>
<dbReference type="InterPro" id="IPR038422">
    <property type="entry name" value="Cut8/Sts1_sf"/>
</dbReference>
<dbReference type="PANTHER" id="PTHR28032">
    <property type="entry name" value="FI02826P"/>
    <property type="match status" value="1"/>
</dbReference>
<dbReference type="PANTHER" id="PTHR28032:SF1">
    <property type="entry name" value="FI02826P"/>
    <property type="match status" value="1"/>
</dbReference>
<dbReference type="Pfam" id="PF08559">
    <property type="entry name" value="Cut8"/>
    <property type="match status" value="1"/>
</dbReference>
<feature type="chain" id="PRO_0000409398" description="Tethering factor for nuclear proteasome sts1">
    <location>
        <begin position="1"/>
        <end position="312"/>
    </location>
</feature>
<feature type="region of interest" description="Disordered" evidence="2">
    <location>
        <begin position="15"/>
        <end position="83"/>
    </location>
</feature>
<feature type="compositionally biased region" description="Low complexity" evidence="2">
    <location>
        <begin position="20"/>
        <end position="32"/>
    </location>
</feature>
<feature type="compositionally biased region" description="Basic and acidic residues" evidence="2">
    <location>
        <begin position="38"/>
        <end position="49"/>
    </location>
</feature>
<protein>
    <recommendedName>
        <fullName>Tethering factor for nuclear proteasome sts1</fullName>
    </recommendedName>
</protein>
<proteinExistence type="inferred from homology"/>
<comment type="function">
    <text evidence="1">Involved in ubiquitin-mediated protein degradation. Regulatory factor in the ubiquitin/proteasome pathway that controls the turnover of proteasome substrates. Targets proteasomes to the nucleus and facilitates the degradation of nuclear proteins (By similarity).</text>
</comment>
<comment type="subunit">
    <text evidence="1">Binds the proteasome.</text>
</comment>
<comment type="subcellular location">
    <subcellularLocation>
        <location evidence="1">Cytoplasm</location>
    </subcellularLocation>
    <subcellularLocation>
        <location evidence="1">Nucleus</location>
    </subcellularLocation>
</comment>
<comment type="similarity">
    <text evidence="3">Belongs to the cut8/STS1 family.</text>
</comment>
<sequence length="312" mass="34181">MNSLVATPVPPHFYEYSRLSSPHPMSTPTHTPINRKRKADDDGNDHDGRMSASPTNSPAFTPRSLPAPRSFKRSRPNVSGRPLSLPRLLETLDTDALRGILRSMCERHPALADEVIHTSPRPSVSSALQVLRNYQSTLQNSFPLGGNPESDYAYNRVRQPLGNLLDALSDFTPHFLPPHETQASVSLSYLDGATDIIHALPRWHSPQNNIERDSAYDEICKAWILVIREAAKRGGGIQLQYGGWDQKLAKHNQNAGGRLQAAVNELGNSLGWMHGPDSQGYGSSTGGDLVSVREQLLSGTYGLGTPVKVGPW</sequence>
<keyword id="KW-0963">Cytoplasm</keyword>
<keyword id="KW-0539">Nucleus</keyword>
<keyword id="KW-0653">Protein transport</keyword>
<keyword id="KW-1185">Reference proteome</keyword>
<keyword id="KW-0813">Transport</keyword>
<gene>
    <name type="primary">sts1</name>
    <name type="ORF">AFUA_4G07170</name>
</gene>
<organism>
    <name type="scientific">Aspergillus fumigatus (strain ATCC MYA-4609 / CBS 101355 / FGSC A1100 / Af293)</name>
    <name type="common">Neosartorya fumigata</name>
    <dbReference type="NCBI Taxonomy" id="330879"/>
    <lineage>
        <taxon>Eukaryota</taxon>
        <taxon>Fungi</taxon>
        <taxon>Dikarya</taxon>
        <taxon>Ascomycota</taxon>
        <taxon>Pezizomycotina</taxon>
        <taxon>Eurotiomycetes</taxon>
        <taxon>Eurotiomycetidae</taxon>
        <taxon>Eurotiales</taxon>
        <taxon>Aspergillaceae</taxon>
        <taxon>Aspergillus</taxon>
        <taxon>Aspergillus subgen. Fumigati</taxon>
    </lineage>
</organism>
<evidence type="ECO:0000250" key="1"/>
<evidence type="ECO:0000256" key="2">
    <source>
        <dbReference type="SAM" id="MobiDB-lite"/>
    </source>
</evidence>
<evidence type="ECO:0000305" key="3"/>